<gene>
    <name type="primary">Enpep</name>
</gene>
<sequence length="945" mass="107995">MNFAEEEPSKKYCIKGKHVAIICATVVAVGLIVGLSVGLTRSCEPGTTPAPSNPPPHTSTALPPQDQNVCPDSDDESGEWKNFRLPDFIQPVHYDLEVKVLMEEDRYTGIVSISVNLSKDTRDLWLHIRETRITKLPELRRPSGEQVPIRRCFEYKKQEYVVIQAEEDLAATSGDSVYRLTIEFEGWLNGSLVGFYRTTYTEDGQTKSIAATDHEPTDARKSFPCFDEPNKKATYNISLIHPKEYSALSNMPVEKKETLDNDWKKTTFMKSVPMSTYLVCFAVHQFTSIQRTSRSGKPLTVYVQPNQKQTAEYAANITKAVFDFFEDYFAMEYSLPKLDKIAIPDFGTGAMENWGLVTYRETNLLYDPLLSASSNQQRVASVVAHELVHQWFGNIVTMDWWDDLWLNEGFASFFEFLGVNHAEADWQMLSQVLLEDVLPVQEDDSLMSSHPVVVTVSTPAEITSVFDGISYSKGASILRMLQDWITPEKFQKGCQIYLENFKFKNAKTSDFWDSLEKASNQPVKEVMDTWTSQMGYPVVTVSGKQNVTQKRFLLDYKADPSQPPSALGYTWNIPIKWTENGNSNITVYYRSNREGITLNANLSGDGFLKINPDHIGFYRVNYEAETWDWIAETLSSNHMNFSSADRSSFIDDAFALARAQLLDYEKALNLTRYLTSEKDFLPWERVISAVSYIISMFEDDRELYPLIETYFRSQVKPIADSLGWQDTGSHITKLLRASVLGFACKMGAGEALGNASQLFEAWLKGNESIPVNLRLLVYRYGMQNSGNEAAWNYTLEQYQKTSLAQEKEKLLYGLASVKDVTLLARYLEMLKDPNIIKTQDVFTVIRYISYNSYGKSMAWNWIQLNWDYLVNRFTINDRYLGRIVTIAEPFNTELQLWQMQSFFAKYPNAGAGAKPREQVLETVKNNIEWLKLNRKSISEWFTSMP</sequence>
<comment type="function">
    <text evidence="1">Regulates central hypertension through its calcium-modulated preference to cleave N-terminal acidic residues from peptides such as angiotensin II.</text>
</comment>
<comment type="catalytic activity">
    <reaction evidence="1">
        <text>Release of N-terminal glutamate (and to a lesser extent aspartate) from a peptide.</text>
        <dbReference type="EC" id="3.4.11.7"/>
    </reaction>
</comment>
<comment type="cofactor">
    <cofactor evidence="1">
        <name>Zn(2+)</name>
        <dbReference type="ChEBI" id="CHEBI:29105"/>
    </cofactor>
    <text evidence="1">Binds 1 zinc ion per subunit.</text>
</comment>
<comment type="activity regulation">
    <text evidence="1">Substrate specificity is modulated by calcium which enhances the enzymatic activity for cleavage of acidic residues while reducing its activity with basic residues. Inhibited by aminopeptidase inhibitors amastatin and bestatin.</text>
</comment>
<comment type="subunit">
    <text evidence="1">Homodimer; disulfide-linked.</text>
</comment>
<comment type="subcellular location">
    <subcellularLocation>
        <location evidence="1">Cell membrane</location>
        <topology>Single-pass type II membrane protein</topology>
    </subcellularLocation>
</comment>
<comment type="alternative products">
    <event type="alternative splicing"/>
    <isoform>
        <id>P50123-1</id>
        <name>1</name>
        <name>APAL</name>
        <sequence type="displayed"/>
    </isoform>
    <isoform>
        <id>P50123-2</id>
        <name>2</name>
        <name>APAS</name>
        <sequence type="described" ref="VSP_007844 VSP_007845"/>
    </isoform>
</comment>
<comment type="tissue specificity">
    <text evidence="5 6 7 8">Highest expression in kidney proximal tubules and ileum enterocytes. High expression also detected in liver and pituitary. Lower levels in heart, adrenal gland and brain. Not detected in aorta, lung or spleen. In heart, higher levels in ventricle than in atrium. Also expressed in glomerular mesangial cells.</text>
</comment>
<comment type="similarity">
    <text evidence="10">Belongs to the peptidase M1 family.</text>
</comment>
<feature type="chain" id="PRO_0000095098" description="Glutamyl aminopeptidase">
    <location>
        <begin position="1"/>
        <end position="945"/>
    </location>
</feature>
<feature type="topological domain" description="Cytoplasmic" evidence="2">
    <location>
        <begin position="1"/>
        <end position="18"/>
    </location>
</feature>
<feature type="transmembrane region" description="Helical; Signal-anchor for type II membrane protein" evidence="2">
    <location>
        <begin position="19"/>
        <end position="39"/>
    </location>
</feature>
<feature type="topological domain" description="Extracellular" evidence="2">
    <location>
        <begin position="40"/>
        <end position="945"/>
    </location>
</feature>
<feature type="region of interest" description="Disordered" evidence="4">
    <location>
        <begin position="45"/>
        <end position="77"/>
    </location>
</feature>
<feature type="active site" description="Proton acceptor" evidence="3">
    <location>
        <position position="386"/>
    </location>
</feature>
<feature type="binding site" evidence="1">
    <location>
        <position position="215"/>
    </location>
    <ligand>
        <name>substrate</name>
    </ligand>
</feature>
<feature type="binding site" evidence="1">
    <location>
        <begin position="349"/>
        <end position="353"/>
    </location>
    <ligand>
        <name>substrate</name>
    </ligand>
</feature>
<feature type="binding site" evidence="3">
    <location>
        <position position="385"/>
    </location>
    <ligand>
        <name>Zn(2+)</name>
        <dbReference type="ChEBI" id="CHEBI:29105"/>
        <note>catalytic</note>
    </ligand>
</feature>
<feature type="binding site" evidence="3">
    <location>
        <position position="389"/>
    </location>
    <ligand>
        <name>Zn(2+)</name>
        <dbReference type="ChEBI" id="CHEBI:29105"/>
        <note>catalytic</note>
    </ligand>
</feature>
<feature type="binding site" evidence="3">
    <location>
        <position position="408"/>
    </location>
    <ligand>
        <name>Zn(2+)</name>
        <dbReference type="ChEBI" id="CHEBI:29105"/>
        <note>catalytic</note>
    </ligand>
</feature>
<feature type="binding site" evidence="1">
    <location>
        <position position="878"/>
    </location>
    <ligand>
        <name>substrate</name>
    </ligand>
</feature>
<feature type="site" description="Binds calcium which modulates its enzyme activity" evidence="1">
    <location>
        <position position="213"/>
    </location>
</feature>
<feature type="site" description="Transition state stabilizer" evidence="1">
    <location>
        <position position="471"/>
    </location>
</feature>
<feature type="glycosylation site" description="N-linked (GlcNAc...) asparagine" evidence="2">
    <location>
        <position position="116"/>
    </location>
</feature>
<feature type="glycosylation site" description="N-linked (GlcNAc...) asparagine" evidence="2">
    <location>
        <position position="189"/>
    </location>
</feature>
<feature type="glycosylation site" description="N-linked (GlcNAc...) asparagine" evidence="2">
    <location>
        <position position="236"/>
    </location>
</feature>
<feature type="glycosylation site" description="N-linked (GlcNAc...) asparagine" evidence="2">
    <location>
        <position position="316"/>
    </location>
</feature>
<feature type="glycosylation site" description="N-linked (GlcNAc...) asparagine" evidence="2">
    <location>
        <position position="546"/>
    </location>
</feature>
<feature type="glycosylation site" description="N-linked (GlcNAc...) asparagine" evidence="2">
    <location>
        <position position="584"/>
    </location>
</feature>
<feature type="glycosylation site" description="N-linked (GlcNAc...) asparagine" evidence="2">
    <location>
        <position position="601"/>
    </location>
</feature>
<feature type="glycosylation site" description="N-linked (GlcNAc...) asparagine" evidence="2">
    <location>
        <position position="640"/>
    </location>
</feature>
<feature type="glycosylation site" description="N-linked (GlcNAc...) asparagine" evidence="2">
    <location>
        <position position="669"/>
    </location>
</feature>
<feature type="glycosylation site" description="N-linked (GlcNAc...) asparagine" evidence="2">
    <location>
        <position position="754"/>
    </location>
</feature>
<feature type="glycosylation site" description="N-linked (GlcNAc...) asparagine" evidence="2">
    <location>
        <position position="766"/>
    </location>
</feature>
<feature type="glycosylation site" description="N-linked (GlcNAc...) asparagine" evidence="2">
    <location>
        <position position="792"/>
    </location>
</feature>
<feature type="splice variant" id="VSP_007844" description="In isoform 2." evidence="9">
    <original>YTWNI</original>
    <variation>NHFEC</variation>
    <location>
        <begin position="569"/>
        <end position="573"/>
    </location>
</feature>
<feature type="splice variant" id="VSP_007845" description="In isoform 2." evidence="9">
    <location>
        <begin position="574"/>
        <end position="945"/>
    </location>
</feature>
<feature type="sequence conflict" description="In Ref. 2; AAF66704/AAF66710." evidence="10" ref="2">
    <original>K</original>
    <variation>E</variation>
    <location>
        <position position="256"/>
    </location>
</feature>
<feature type="sequence conflict" description="In Ref. 2; AAF66704/AAF66710." evidence="10" ref="2">
    <original>N</original>
    <variation>K</variation>
    <location>
        <position position="306"/>
    </location>
</feature>
<feature type="sequence conflict" description="In Ref. 2; AAF66704." evidence="10" ref="2">
    <original>A</original>
    <variation>D</variation>
    <location>
        <position position="748"/>
    </location>
</feature>
<protein>
    <recommendedName>
        <fullName>Glutamyl aminopeptidase</fullName>
        <shortName>EAP</shortName>
        <ecNumber>3.4.11.7</ecNumber>
    </recommendedName>
    <alternativeName>
        <fullName>Aminopeptidase A</fullName>
        <shortName>AP-A</shortName>
    </alternativeName>
    <cdAntigenName>CD249</cdAntigenName>
</protein>
<organism>
    <name type="scientific">Rattus norvegicus</name>
    <name type="common">Rat</name>
    <dbReference type="NCBI Taxonomy" id="10116"/>
    <lineage>
        <taxon>Eukaryota</taxon>
        <taxon>Metazoa</taxon>
        <taxon>Chordata</taxon>
        <taxon>Craniata</taxon>
        <taxon>Vertebrata</taxon>
        <taxon>Euteleostomi</taxon>
        <taxon>Mammalia</taxon>
        <taxon>Eutheria</taxon>
        <taxon>Euarchontoglires</taxon>
        <taxon>Glires</taxon>
        <taxon>Rodentia</taxon>
        <taxon>Myomorpha</taxon>
        <taxon>Muroidea</taxon>
        <taxon>Muridae</taxon>
        <taxon>Murinae</taxon>
        <taxon>Rattus</taxon>
    </lineage>
</organism>
<keyword id="KW-0025">Alternative splicing</keyword>
<keyword id="KW-0031">Aminopeptidase</keyword>
<keyword id="KW-0106">Calcium</keyword>
<keyword id="KW-1003">Cell membrane</keyword>
<keyword id="KW-0903">Direct protein sequencing</keyword>
<keyword id="KW-1015">Disulfide bond</keyword>
<keyword id="KW-0325">Glycoprotein</keyword>
<keyword id="KW-0378">Hydrolase</keyword>
<keyword id="KW-0472">Membrane</keyword>
<keyword id="KW-0479">Metal-binding</keyword>
<keyword id="KW-0482">Metalloprotease</keyword>
<keyword id="KW-0645">Protease</keyword>
<keyword id="KW-1185">Reference proteome</keyword>
<keyword id="KW-0735">Signal-anchor</keyword>
<keyword id="KW-0812">Transmembrane</keyword>
<keyword id="KW-1133">Transmembrane helix</keyword>
<keyword id="KW-0862">Zinc</keyword>
<proteinExistence type="evidence at protein level"/>
<evidence type="ECO:0000250" key="1">
    <source>
        <dbReference type="UniProtKB" id="Q07075"/>
    </source>
</evidence>
<evidence type="ECO:0000255" key="2"/>
<evidence type="ECO:0000255" key="3">
    <source>
        <dbReference type="PROSITE-ProRule" id="PRU10095"/>
    </source>
</evidence>
<evidence type="ECO:0000256" key="4">
    <source>
        <dbReference type="SAM" id="MobiDB-lite"/>
    </source>
</evidence>
<evidence type="ECO:0000269" key="5">
    <source>
    </source>
</evidence>
<evidence type="ECO:0000269" key="6">
    <source>
    </source>
</evidence>
<evidence type="ECO:0000269" key="7">
    <source>
    </source>
</evidence>
<evidence type="ECO:0000269" key="8">
    <source>
    </source>
</evidence>
<evidence type="ECO:0000303" key="9">
    <source>
    </source>
</evidence>
<evidence type="ECO:0000305" key="10"/>
<reference key="1">
    <citation type="journal article" date="2000" name="Am. J. Physiol.">
        <title>Aminopeptidase-A. I. cDNA cloning and expression and localization in rat tissues.</title>
        <authorList>
            <person name="Troyanovskaya M."/>
            <person name="Jayaraman G."/>
            <person name="Song L."/>
            <person name="Healy D.P."/>
        </authorList>
    </citation>
    <scope>NUCLEOTIDE SEQUENCE [MRNA] (ISOFORM 1)</scope>
    <scope>TISSUE SPECIFICITY</scope>
    <source>
        <tissue>Kidney</tissue>
    </source>
</reference>
<reference key="2">
    <citation type="journal article" date="2000" name="Biochim. Biophys. Acta">
        <title>Molecular cloning and expression of aminopeptidase A isoforms from rat hippocampus.</title>
        <authorList>
            <person name="Lee H.-J."/>
            <person name="Tomioka M."/>
            <person name="Takaki Y."/>
            <person name="Masumoto H."/>
            <person name="Saido T.C."/>
        </authorList>
    </citation>
    <scope>NUCLEOTIDE SEQUENCE [MRNA] (ISOFORMS 1 AND 2)</scope>
    <scope>TISSUE SPECIFICITY</scope>
    <source>
        <strain>Sprague-Dawley</strain>
        <tissue>Hippocampus</tissue>
    </source>
</reference>
<reference key="3">
    <citation type="journal article" date="2004" name="Genome Res.">
        <title>The status, quality, and expansion of the NIH full-length cDNA project: the Mammalian Gene Collection (MGC).</title>
        <authorList>
            <consortium name="The MGC Project Team"/>
        </authorList>
    </citation>
    <scope>NUCLEOTIDE SEQUENCE [LARGE SCALE MRNA] (ISOFORM 1)</scope>
    <source>
        <tissue>Prostate</tissue>
    </source>
</reference>
<reference key="4">
    <citation type="journal article" date="1994" name="Am. J. Physiol.">
        <title>Rat kidney glutamyl aminopeptidase (aminopeptidase A): molecular identity and cellular localization.</title>
        <authorList>
            <person name="Song L."/>
            <person name="Ye M."/>
            <person name="Troyanovskaya M."/>
            <person name="Wilk E."/>
            <person name="Wilk S."/>
            <person name="Healy D.P."/>
        </authorList>
    </citation>
    <scope>NUCLEOTIDE SEQUENCE [MRNA] OF 265-397</scope>
    <scope>PROTEIN SEQUENCE OF 714-731 (ISOFORM 1)</scope>
    <scope>TISSUE SPECIFICITY</scope>
    <source>
        <tissue>Kidney</tissue>
    </source>
</reference>
<reference key="5">
    <citation type="journal article" date="1996" name="Hypertension">
        <title>Expression of aminopeptidase A, an angiotensinase, in glomerular mesangial cells.</title>
        <authorList>
            <person name="Troyanovskaya M."/>
            <person name="Song L."/>
            <person name="Jayaraman G."/>
            <person name="Healy D.P."/>
        </authorList>
    </citation>
    <scope>NUCLEOTIDE SEQUENCE [MRNA] OF 482-606 (ISOFORM 1)</scope>
    <scope>TISSUE SPECIFICITY</scope>
    <source>
        <tissue>Kidney</tissue>
    </source>
</reference>
<dbReference type="EC" id="3.4.11.7"/>
<dbReference type="EMBL" id="AF146044">
    <property type="protein sequence ID" value="AAF66704.1"/>
    <property type="molecule type" value="mRNA"/>
</dbReference>
<dbReference type="EMBL" id="AF146518">
    <property type="protein sequence ID" value="AAF66710.1"/>
    <property type="molecule type" value="mRNA"/>
</dbReference>
<dbReference type="EMBL" id="BC066663">
    <property type="protein sequence ID" value="AAH66663.1"/>
    <property type="molecule type" value="mRNA"/>
</dbReference>
<dbReference type="EMBL" id="AF214568">
    <property type="protein sequence ID" value="AAF37622.1"/>
    <property type="molecule type" value="mRNA"/>
</dbReference>
<dbReference type="RefSeq" id="NP_071587.2">
    <property type="nucleotide sequence ID" value="NM_022251.2"/>
</dbReference>
<dbReference type="SMR" id="P50123"/>
<dbReference type="BioGRID" id="248936">
    <property type="interactions" value="1"/>
</dbReference>
<dbReference type="FunCoup" id="P50123">
    <property type="interactions" value="457"/>
</dbReference>
<dbReference type="IntAct" id="P50123">
    <property type="interactions" value="1"/>
</dbReference>
<dbReference type="STRING" id="10116.ENSRNOP00000068728"/>
<dbReference type="MEROPS" id="M01.003"/>
<dbReference type="GlyCosmos" id="P50123">
    <property type="glycosylation" value="12 sites, No reported glycans"/>
</dbReference>
<dbReference type="GlyGen" id="P50123">
    <property type="glycosylation" value="13 sites"/>
</dbReference>
<dbReference type="iPTMnet" id="P50123"/>
<dbReference type="PhosphoSitePlus" id="P50123"/>
<dbReference type="PaxDb" id="10116-ENSRNOP00000064188"/>
<dbReference type="GeneID" id="64017"/>
<dbReference type="KEGG" id="rno:64017"/>
<dbReference type="UCSC" id="RGD:621228">
    <molecule id="P50123-1"/>
    <property type="organism name" value="rat"/>
</dbReference>
<dbReference type="AGR" id="RGD:621228"/>
<dbReference type="CTD" id="2028"/>
<dbReference type="RGD" id="621228">
    <property type="gene designation" value="Enpep"/>
</dbReference>
<dbReference type="eggNOG" id="KOG1046">
    <property type="taxonomic scope" value="Eukaryota"/>
</dbReference>
<dbReference type="InParanoid" id="P50123"/>
<dbReference type="OrthoDB" id="510539at2759"/>
<dbReference type="PhylomeDB" id="P50123"/>
<dbReference type="BRENDA" id="3.4.11.7">
    <property type="organism ID" value="5301"/>
</dbReference>
<dbReference type="Reactome" id="R-RNO-2022377">
    <property type="pathway name" value="Metabolism of Angiotensinogen to Angiotensins"/>
</dbReference>
<dbReference type="PRO" id="PR:P50123"/>
<dbReference type="Proteomes" id="UP000002494">
    <property type="component" value="Unplaced"/>
</dbReference>
<dbReference type="GO" id="GO:0045177">
    <property type="term" value="C:apical part of cell"/>
    <property type="evidence" value="ECO:0000266"/>
    <property type="project" value="RGD"/>
</dbReference>
<dbReference type="GO" id="GO:0016324">
    <property type="term" value="C:apical plasma membrane"/>
    <property type="evidence" value="ECO:0000266"/>
    <property type="project" value="RGD"/>
</dbReference>
<dbReference type="GO" id="GO:0005903">
    <property type="term" value="C:brush border"/>
    <property type="evidence" value="ECO:0000266"/>
    <property type="project" value="RGD"/>
</dbReference>
<dbReference type="GO" id="GO:0031526">
    <property type="term" value="C:brush border membrane"/>
    <property type="evidence" value="ECO:0000314"/>
    <property type="project" value="RGD"/>
</dbReference>
<dbReference type="GO" id="GO:0005737">
    <property type="term" value="C:cytoplasm"/>
    <property type="evidence" value="ECO:0000318"/>
    <property type="project" value="GO_Central"/>
</dbReference>
<dbReference type="GO" id="GO:0031410">
    <property type="term" value="C:cytoplasmic vesicle"/>
    <property type="evidence" value="ECO:0000266"/>
    <property type="project" value="RGD"/>
</dbReference>
<dbReference type="GO" id="GO:0009897">
    <property type="term" value="C:external side of plasma membrane"/>
    <property type="evidence" value="ECO:0000266"/>
    <property type="project" value="RGD"/>
</dbReference>
<dbReference type="GO" id="GO:0005615">
    <property type="term" value="C:extracellular space"/>
    <property type="evidence" value="ECO:0000318"/>
    <property type="project" value="GO_Central"/>
</dbReference>
<dbReference type="GO" id="GO:0005886">
    <property type="term" value="C:plasma membrane"/>
    <property type="evidence" value="ECO:0000250"/>
    <property type="project" value="UniProtKB"/>
</dbReference>
<dbReference type="GO" id="GO:0004177">
    <property type="term" value="F:aminopeptidase activity"/>
    <property type="evidence" value="ECO:0000314"/>
    <property type="project" value="RGD"/>
</dbReference>
<dbReference type="GO" id="GO:0004230">
    <property type="term" value="F:glutamyl aminopeptidase activity"/>
    <property type="evidence" value="ECO:0007669"/>
    <property type="project" value="UniProtKB-EC"/>
</dbReference>
<dbReference type="GO" id="GO:0070006">
    <property type="term" value="F:metalloaminopeptidase activity"/>
    <property type="evidence" value="ECO:0000250"/>
    <property type="project" value="UniProtKB"/>
</dbReference>
<dbReference type="GO" id="GO:0008237">
    <property type="term" value="F:metallopeptidase activity"/>
    <property type="evidence" value="ECO:0000266"/>
    <property type="project" value="RGD"/>
</dbReference>
<dbReference type="GO" id="GO:0008233">
    <property type="term" value="F:peptidase activity"/>
    <property type="evidence" value="ECO:0000266"/>
    <property type="project" value="RGD"/>
</dbReference>
<dbReference type="GO" id="GO:0042277">
    <property type="term" value="F:peptide binding"/>
    <property type="evidence" value="ECO:0000314"/>
    <property type="project" value="RGD"/>
</dbReference>
<dbReference type="GO" id="GO:0008270">
    <property type="term" value="F:zinc ion binding"/>
    <property type="evidence" value="ECO:0000318"/>
    <property type="project" value="GO_Central"/>
</dbReference>
<dbReference type="GO" id="GO:0001525">
    <property type="term" value="P:angiogenesis"/>
    <property type="evidence" value="ECO:0000266"/>
    <property type="project" value="RGD"/>
</dbReference>
<dbReference type="GO" id="GO:0002003">
    <property type="term" value="P:angiotensin maturation"/>
    <property type="evidence" value="ECO:0000266"/>
    <property type="project" value="RGD"/>
</dbReference>
<dbReference type="GO" id="GO:0016477">
    <property type="term" value="P:cell migration"/>
    <property type="evidence" value="ECO:0000250"/>
    <property type="project" value="UniProtKB"/>
</dbReference>
<dbReference type="GO" id="GO:0008283">
    <property type="term" value="P:cell population proliferation"/>
    <property type="evidence" value="ECO:0000250"/>
    <property type="project" value="UniProtKB"/>
</dbReference>
<dbReference type="GO" id="GO:0032835">
    <property type="term" value="P:glomerulus development"/>
    <property type="evidence" value="ECO:0000266"/>
    <property type="project" value="RGD"/>
</dbReference>
<dbReference type="GO" id="GO:0043171">
    <property type="term" value="P:peptide catabolic process"/>
    <property type="evidence" value="ECO:0000314"/>
    <property type="project" value="RGD"/>
</dbReference>
<dbReference type="GO" id="GO:0016485">
    <property type="term" value="P:protein processing"/>
    <property type="evidence" value="ECO:0000314"/>
    <property type="project" value="RGD"/>
</dbReference>
<dbReference type="GO" id="GO:0006508">
    <property type="term" value="P:proteolysis"/>
    <property type="evidence" value="ECO:0000318"/>
    <property type="project" value="GO_Central"/>
</dbReference>
<dbReference type="GO" id="GO:0008217">
    <property type="term" value="P:regulation of blood pressure"/>
    <property type="evidence" value="ECO:0000318"/>
    <property type="project" value="GO_Central"/>
</dbReference>
<dbReference type="GO" id="GO:0003081">
    <property type="term" value="P:regulation of systemic arterial blood pressure by renin-angiotensin"/>
    <property type="evidence" value="ECO:0000250"/>
    <property type="project" value="UniProtKB"/>
</dbReference>
<dbReference type="CDD" id="cd09601">
    <property type="entry name" value="M1_APN-Q_like"/>
    <property type="match status" value="1"/>
</dbReference>
<dbReference type="FunFam" id="1.25.50.20:FF:000001">
    <property type="entry name" value="Aminopeptidase"/>
    <property type="match status" value="1"/>
</dbReference>
<dbReference type="FunFam" id="2.60.40.1730:FF:000006">
    <property type="entry name" value="Aminopeptidase"/>
    <property type="match status" value="1"/>
</dbReference>
<dbReference type="FunFam" id="2.60.40.1910:FF:000003">
    <property type="entry name" value="Aminopeptidase"/>
    <property type="match status" value="1"/>
</dbReference>
<dbReference type="FunFam" id="1.10.390.10:FF:000016">
    <property type="entry name" value="Glutamyl aminopeptidase"/>
    <property type="match status" value="1"/>
</dbReference>
<dbReference type="Gene3D" id="1.25.50.20">
    <property type="match status" value="1"/>
</dbReference>
<dbReference type="Gene3D" id="2.60.40.1910">
    <property type="match status" value="1"/>
</dbReference>
<dbReference type="Gene3D" id="1.10.390.10">
    <property type="entry name" value="Neutral Protease Domain 2"/>
    <property type="match status" value="1"/>
</dbReference>
<dbReference type="Gene3D" id="2.60.40.1730">
    <property type="entry name" value="tricorn interacting facor f3 domain"/>
    <property type="match status" value="1"/>
</dbReference>
<dbReference type="InterPro" id="IPR045357">
    <property type="entry name" value="Aminopeptidase_N-like_N"/>
</dbReference>
<dbReference type="InterPro" id="IPR042097">
    <property type="entry name" value="Aminopeptidase_N-like_N_sf"/>
</dbReference>
<dbReference type="InterPro" id="IPR024571">
    <property type="entry name" value="ERAP1-like_C_dom"/>
</dbReference>
<dbReference type="InterPro" id="IPR034016">
    <property type="entry name" value="M1_APN-typ"/>
</dbReference>
<dbReference type="InterPro" id="IPR001930">
    <property type="entry name" value="Peptidase_M1"/>
</dbReference>
<dbReference type="InterPro" id="IPR050344">
    <property type="entry name" value="Peptidase_M1_aminopeptidases"/>
</dbReference>
<dbReference type="InterPro" id="IPR014782">
    <property type="entry name" value="Peptidase_M1_dom"/>
</dbReference>
<dbReference type="InterPro" id="IPR027268">
    <property type="entry name" value="Peptidase_M4/M1_CTD_sf"/>
</dbReference>
<dbReference type="PANTHER" id="PTHR11533:SF276">
    <property type="entry name" value="GLUTAMYL AMINOPEPTIDASE"/>
    <property type="match status" value="1"/>
</dbReference>
<dbReference type="PANTHER" id="PTHR11533">
    <property type="entry name" value="PROTEASE M1 ZINC METALLOPROTEASE"/>
    <property type="match status" value="1"/>
</dbReference>
<dbReference type="Pfam" id="PF11838">
    <property type="entry name" value="ERAP1_C"/>
    <property type="match status" value="1"/>
</dbReference>
<dbReference type="Pfam" id="PF01433">
    <property type="entry name" value="Peptidase_M1"/>
    <property type="match status" value="1"/>
</dbReference>
<dbReference type="Pfam" id="PF17900">
    <property type="entry name" value="Peptidase_M1_N"/>
    <property type="match status" value="1"/>
</dbReference>
<dbReference type="PRINTS" id="PR00756">
    <property type="entry name" value="ALADIPTASE"/>
</dbReference>
<dbReference type="SUPFAM" id="SSF63737">
    <property type="entry name" value="Leukotriene A4 hydrolase N-terminal domain"/>
    <property type="match status" value="1"/>
</dbReference>
<dbReference type="SUPFAM" id="SSF55486">
    <property type="entry name" value="Metalloproteases ('zincins'), catalytic domain"/>
    <property type="match status" value="1"/>
</dbReference>
<dbReference type="PROSITE" id="PS00142">
    <property type="entry name" value="ZINC_PROTEASE"/>
    <property type="match status" value="1"/>
</dbReference>
<name>AMPE_RAT</name>
<accession>P50123</accession>
<accession>Q64200</accession>
<accession>Q9JLQ7</accession>
<accession>Q9JLQ9</accession>
<accession>Q9QV24</accession>